<proteinExistence type="evidence at transcript level"/>
<accession>Q3B8E9</accession>
<accession>A0A1L8F9B0</accession>
<sequence>MEDVLDLGEAPSRRTGVKMGRRARAAQETQQETADVSRNQTGREGPPKPLRQGGWADDSSGPSKSTRRMTDDVEDSRLKQQSLDESDEGEDIPVIPDLEDVQEEDLALQVASPPSVQVNRVMTYRDLDNDLMRHAAFQSLDGDVDLKLLTKVLSPEPEVREENVRWDWDLLFTEVSSELITEWDVGKMEKEDMLKPSPLVS</sequence>
<comment type="function">
    <text evidence="1">As a component of IFT complex A (IFT-A), a complex required for retrograde ciliary transport and entry into cilia of G protein-coupled receptors (GPCRs), it is involved in ciliogenesis. Involved in retrograde ciliary transport along microtubules from the ciliary tip to the base.</text>
</comment>
<comment type="subunit">
    <text evidence="1">Component of the IFT complex A (IFT-A) complex.</text>
</comment>
<comment type="subcellular location">
    <subcellularLocation>
        <location evidence="1">Cytoplasm</location>
        <location evidence="1">Cytoskeleton</location>
    </subcellularLocation>
    <subcellularLocation>
        <location evidence="1">Cell projection</location>
        <location evidence="1">Cilium</location>
    </subcellularLocation>
    <text evidence="1">Associated with microtubules. Localized at the distal tip of the cilium.</text>
</comment>
<comment type="similarity">
    <text evidence="3">Belongs to the IFT43 family.</text>
</comment>
<keyword id="KW-0966">Cell projection</keyword>
<keyword id="KW-0970">Cilium biogenesis/degradation</keyword>
<keyword id="KW-0963">Cytoplasm</keyword>
<keyword id="KW-0206">Cytoskeleton</keyword>
<keyword id="KW-1185">Reference proteome</keyword>
<reference evidence="4" key="1">
    <citation type="journal article" date="2016" name="Nature">
        <title>Genome evolution in the allotetraploid frog Xenopus laevis.</title>
        <authorList>
            <person name="Session A.M."/>
            <person name="Uno Y."/>
            <person name="Kwon T."/>
            <person name="Chapman J.A."/>
            <person name="Toyoda A."/>
            <person name="Takahashi S."/>
            <person name="Fukui A."/>
            <person name="Hikosaka A."/>
            <person name="Suzuki A."/>
            <person name="Kondo M."/>
            <person name="van Heeringen S.J."/>
            <person name="Quigley I."/>
            <person name="Heinz S."/>
            <person name="Ogino H."/>
            <person name="Ochi H."/>
            <person name="Hellsten U."/>
            <person name="Lyons J.B."/>
            <person name="Simakov O."/>
            <person name="Putnam N."/>
            <person name="Stites J."/>
            <person name="Kuroki Y."/>
            <person name="Tanaka T."/>
            <person name="Michiue T."/>
            <person name="Watanabe M."/>
            <person name="Bogdanovic O."/>
            <person name="Lister R."/>
            <person name="Georgiou G."/>
            <person name="Paranjpe S.S."/>
            <person name="van Kruijsbergen I."/>
            <person name="Shu S."/>
            <person name="Carlson J."/>
            <person name="Kinoshita T."/>
            <person name="Ohta Y."/>
            <person name="Mawaribuchi S."/>
            <person name="Jenkins J."/>
            <person name="Grimwood J."/>
            <person name="Schmutz J."/>
            <person name="Mitros T."/>
            <person name="Mozaffari S.V."/>
            <person name="Suzuki Y."/>
            <person name="Haramoto Y."/>
            <person name="Yamamoto T.S."/>
            <person name="Takagi C."/>
            <person name="Heald R."/>
            <person name="Miller K."/>
            <person name="Haudenschild C."/>
            <person name="Kitzman J."/>
            <person name="Nakayama T."/>
            <person name="Izutsu Y."/>
            <person name="Robert J."/>
            <person name="Fortriede J."/>
            <person name="Burns K."/>
            <person name="Lotay V."/>
            <person name="Karimi K."/>
            <person name="Yasuoka Y."/>
            <person name="Dichmann D.S."/>
            <person name="Flajnik M.F."/>
            <person name="Houston D.W."/>
            <person name="Shendure J."/>
            <person name="DuPasquier L."/>
            <person name="Vize P.D."/>
            <person name="Zorn A.M."/>
            <person name="Ito M."/>
            <person name="Marcotte E.M."/>
            <person name="Wallingford J.B."/>
            <person name="Ito Y."/>
            <person name="Asashima M."/>
            <person name="Ueno N."/>
            <person name="Matsuda Y."/>
            <person name="Veenstra G.J."/>
            <person name="Fujiyama A."/>
            <person name="Harland R.M."/>
            <person name="Taira M."/>
            <person name="Rokhsar D.S."/>
        </authorList>
    </citation>
    <scope>NUCLEOTIDE SEQUENCE [LARGE SCALE GENOMIC DNA]</scope>
    <source>
        <strain evidence="4">J</strain>
    </source>
</reference>
<reference key="2">
    <citation type="submission" date="2005-10" db="EMBL/GenBank/DDBJ databases">
        <authorList>
            <consortium name="NIH - Xenopus Gene Collection (XGC) project"/>
        </authorList>
    </citation>
    <scope>NUCLEOTIDE SEQUENCE [LARGE SCALE MRNA]</scope>
    <source>
        <tissue>Testis</tissue>
    </source>
</reference>
<feature type="chain" id="PRO_0000254043" description="Intraflagellar transport protein 43 homolog">
    <location>
        <begin position="1"/>
        <end position="201"/>
    </location>
</feature>
<feature type="region of interest" description="Disordered" evidence="2">
    <location>
        <begin position="1"/>
        <end position="104"/>
    </location>
</feature>
<feature type="compositionally biased region" description="Basic residues" evidence="2">
    <location>
        <begin position="15"/>
        <end position="24"/>
    </location>
</feature>
<feature type="compositionally biased region" description="Basic and acidic residues" evidence="2">
    <location>
        <begin position="68"/>
        <end position="78"/>
    </location>
</feature>
<feature type="compositionally biased region" description="Acidic residues" evidence="2">
    <location>
        <begin position="84"/>
        <end position="104"/>
    </location>
</feature>
<protein>
    <recommendedName>
        <fullName>Intraflagellar transport protein 43 homolog</fullName>
    </recommendedName>
</protein>
<dbReference type="EMBL" id="CM004480">
    <property type="protein sequence ID" value="OCT68172.1"/>
    <property type="molecule type" value="Genomic_DNA"/>
</dbReference>
<dbReference type="EMBL" id="BC106504">
    <property type="protein sequence ID" value="AAI06505.1"/>
    <property type="molecule type" value="mRNA"/>
</dbReference>
<dbReference type="RefSeq" id="NP_001089762.1">
    <property type="nucleotide sequence ID" value="NM_001096293.1"/>
</dbReference>
<dbReference type="SMR" id="Q3B8E9"/>
<dbReference type="STRING" id="8355.A0A1L8F9B0"/>
<dbReference type="PaxDb" id="8355-A0A1L8F9B0"/>
<dbReference type="DNASU" id="734826"/>
<dbReference type="GeneID" id="734826"/>
<dbReference type="KEGG" id="xla:734826"/>
<dbReference type="AGR" id="Xenbase:XB-GENE-5909289"/>
<dbReference type="CTD" id="734826"/>
<dbReference type="Xenbase" id="XB-GENE-5909289">
    <property type="gene designation" value="ift43.L"/>
</dbReference>
<dbReference type="OMA" id="CLGNAEE"/>
<dbReference type="OrthoDB" id="206950at2759"/>
<dbReference type="Proteomes" id="UP000186698">
    <property type="component" value="Chromosome 8L"/>
</dbReference>
<dbReference type="Proteomes" id="UP000694892">
    <property type="component" value="Chromosome 8L"/>
</dbReference>
<dbReference type="Bgee" id="734826">
    <property type="expression patterns" value="Expressed in testis and 19 other cell types or tissues"/>
</dbReference>
<dbReference type="GO" id="GO:0005929">
    <property type="term" value="C:cilium"/>
    <property type="evidence" value="ECO:0000250"/>
    <property type="project" value="UniProtKB"/>
</dbReference>
<dbReference type="GO" id="GO:0005737">
    <property type="term" value="C:cytoplasm"/>
    <property type="evidence" value="ECO:0007669"/>
    <property type="project" value="UniProtKB-KW"/>
</dbReference>
<dbReference type="GO" id="GO:0005856">
    <property type="term" value="C:cytoskeleton"/>
    <property type="evidence" value="ECO:0007669"/>
    <property type="project" value="UniProtKB-SubCell"/>
</dbReference>
<dbReference type="GO" id="GO:0030991">
    <property type="term" value="C:intraciliary transport particle A"/>
    <property type="evidence" value="ECO:0000250"/>
    <property type="project" value="UniProtKB"/>
</dbReference>
<dbReference type="GO" id="GO:0060271">
    <property type="term" value="P:cilium assembly"/>
    <property type="evidence" value="ECO:0000250"/>
    <property type="project" value="UniProtKB"/>
</dbReference>
<dbReference type="GO" id="GO:0035721">
    <property type="term" value="P:intraciliary retrograde transport"/>
    <property type="evidence" value="ECO:0000250"/>
    <property type="project" value="UniProtKB"/>
</dbReference>
<dbReference type="InterPro" id="IPR029302">
    <property type="entry name" value="IFT43"/>
</dbReference>
<dbReference type="PANTHER" id="PTHR33724">
    <property type="entry name" value="INTRAFLAGELLAR TRANSPORT PROTEIN 43 HOMOLOG"/>
    <property type="match status" value="1"/>
</dbReference>
<dbReference type="PANTHER" id="PTHR33724:SF1">
    <property type="entry name" value="INTRAFLAGELLAR TRANSPORT PROTEIN 43 HOMOLOG"/>
    <property type="match status" value="1"/>
</dbReference>
<dbReference type="Pfam" id="PF15305">
    <property type="entry name" value="IFT43"/>
    <property type="match status" value="1"/>
</dbReference>
<organism>
    <name type="scientific">Xenopus laevis</name>
    <name type="common">African clawed frog</name>
    <dbReference type="NCBI Taxonomy" id="8355"/>
    <lineage>
        <taxon>Eukaryota</taxon>
        <taxon>Metazoa</taxon>
        <taxon>Chordata</taxon>
        <taxon>Craniata</taxon>
        <taxon>Vertebrata</taxon>
        <taxon>Euteleostomi</taxon>
        <taxon>Amphibia</taxon>
        <taxon>Batrachia</taxon>
        <taxon>Anura</taxon>
        <taxon>Pipoidea</taxon>
        <taxon>Pipidae</taxon>
        <taxon>Xenopodinae</taxon>
        <taxon>Xenopus</taxon>
        <taxon>Xenopus</taxon>
    </lineage>
</organism>
<name>IFT43_XENLA</name>
<gene>
    <name type="primary">ift43</name>
</gene>
<evidence type="ECO:0000250" key="1">
    <source>
        <dbReference type="UniProtKB" id="Q96FT9"/>
    </source>
</evidence>
<evidence type="ECO:0000256" key="2">
    <source>
        <dbReference type="SAM" id="MobiDB-lite"/>
    </source>
</evidence>
<evidence type="ECO:0000305" key="3"/>
<evidence type="ECO:0000312" key="4">
    <source>
        <dbReference type="Proteomes" id="UP000186698"/>
    </source>
</evidence>